<proteinExistence type="inferred from homology"/>
<dbReference type="EMBL" id="EF115542">
    <property type="protein sequence ID" value="ABK79533.1"/>
    <property type="molecule type" value="Genomic_DNA"/>
</dbReference>
<dbReference type="RefSeq" id="YP_899445.1">
    <property type="nucleotide sequence ID" value="NC_008602.1"/>
</dbReference>
<dbReference type="SMR" id="A1E9W2"/>
<dbReference type="FunCoup" id="A1E9W2">
    <property type="interactions" value="878"/>
</dbReference>
<dbReference type="STRING" id="4558.A1E9W2"/>
<dbReference type="GeneID" id="4549089"/>
<dbReference type="KEGG" id="sbi:4549089"/>
<dbReference type="InParanoid" id="A1E9W2"/>
<dbReference type="OrthoDB" id="34872at2759"/>
<dbReference type="Proteomes" id="UP000000768">
    <property type="component" value="Chloroplast"/>
</dbReference>
<dbReference type="GO" id="GO:0009507">
    <property type="term" value="C:chloroplast"/>
    <property type="evidence" value="ECO:0007669"/>
    <property type="project" value="UniProtKB-SubCell"/>
</dbReference>
<dbReference type="GO" id="GO:0005762">
    <property type="term" value="C:mitochondrial large ribosomal subunit"/>
    <property type="evidence" value="ECO:0000318"/>
    <property type="project" value="GO_Central"/>
</dbReference>
<dbReference type="GO" id="GO:0019843">
    <property type="term" value="F:rRNA binding"/>
    <property type="evidence" value="ECO:0000318"/>
    <property type="project" value="GO_Central"/>
</dbReference>
<dbReference type="GO" id="GO:0003735">
    <property type="term" value="F:structural constituent of ribosome"/>
    <property type="evidence" value="ECO:0000318"/>
    <property type="project" value="GO_Central"/>
</dbReference>
<dbReference type="GO" id="GO:0032543">
    <property type="term" value="P:mitochondrial translation"/>
    <property type="evidence" value="ECO:0000318"/>
    <property type="project" value="GO_Central"/>
</dbReference>
<dbReference type="CDD" id="cd01433">
    <property type="entry name" value="Ribosomal_L16_L10e"/>
    <property type="match status" value="1"/>
</dbReference>
<dbReference type="FunFam" id="3.90.1170.10:FF:000001">
    <property type="entry name" value="50S ribosomal protein L16"/>
    <property type="match status" value="1"/>
</dbReference>
<dbReference type="Gene3D" id="3.90.1170.10">
    <property type="entry name" value="Ribosomal protein L10e/L16"/>
    <property type="match status" value="1"/>
</dbReference>
<dbReference type="HAMAP" id="MF_01342">
    <property type="entry name" value="Ribosomal_uL16"/>
    <property type="match status" value="1"/>
</dbReference>
<dbReference type="InterPro" id="IPR047873">
    <property type="entry name" value="Ribosomal_uL16"/>
</dbReference>
<dbReference type="InterPro" id="IPR000114">
    <property type="entry name" value="Ribosomal_uL16_bact-type"/>
</dbReference>
<dbReference type="InterPro" id="IPR020798">
    <property type="entry name" value="Ribosomal_uL16_CS"/>
</dbReference>
<dbReference type="InterPro" id="IPR016180">
    <property type="entry name" value="Ribosomal_uL16_dom"/>
</dbReference>
<dbReference type="InterPro" id="IPR036920">
    <property type="entry name" value="Ribosomal_uL16_sf"/>
</dbReference>
<dbReference type="NCBIfam" id="TIGR01164">
    <property type="entry name" value="rplP_bact"/>
    <property type="match status" value="1"/>
</dbReference>
<dbReference type="PANTHER" id="PTHR12220">
    <property type="entry name" value="50S/60S RIBOSOMAL PROTEIN L16"/>
    <property type="match status" value="1"/>
</dbReference>
<dbReference type="PANTHER" id="PTHR12220:SF13">
    <property type="entry name" value="LARGE RIBOSOMAL SUBUNIT PROTEIN UL16M"/>
    <property type="match status" value="1"/>
</dbReference>
<dbReference type="Pfam" id="PF00252">
    <property type="entry name" value="Ribosomal_L16"/>
    <property type="match status" value="1"/>
</dbReference>
<dbReference type="PRINTS" id="PR00060">
    <property type="entry name" value="RIBOSOMALL16"/>
</dbReference>
<dbReference type="SUPFAM" id="SSF54686">
    <property type="entry name" value="Ribosomal protein L16p/L10e"/>
    <property type="match status" value="1"/>
</dbReference>
<dbReference type="PROSITE" id="PS00586">
    <property type="entry name" value="RIBOSOMAL_L16_1"/>
    <property type="match status" value="1"/>
</dbReference>
<dbReference type="PROSITE" id="PS00701">
    <property type="entry name" value="RIBOSOMAL_L16_2"/>
    <property type="match status" value="1"/>
</dbReference>
<accession>A1E9W2</accession>
<protein>
    <recommendedName>
        <fullName evidence="1">Large ribosomal subunit protein uL16c</fullName>
    </recommendedName>
    <alternativeName>
        <fullName evidence="2">50S ribosomal protein L16, chloroplastic</fullName>
    </alternativeName>
</protein>
<organism>
    <name type="scientific">Sorghum bicolor</name>
    <name type="common">Sorghum</name>
    <name type="synonym">Sorghum vulgare</name>
    <dbReference type="NCBI Taxonomy" id="4558"/>
    <lineage>
        <taxon>Eukaryota</taxon>
        <taxon>Viridiplantae</taxon>
        <taxon>Streptophyta</taxon>
        <taxon>Embryophyta</taxon>
        <taxon>Tracheophyta</taxon>
        <taxon>Spermatophyta</taxon>
        <taxon>Magnoliopsida</taxon>
        <taxon>Liliopsida</taxon>
        <taxon>Poales</taxon>
        <taxon>Poaceae</taxon>
        <taxon>PACMAD clade</taxon>
        <taxon>Panicoideae</taxon>
        <taxon>Andropogonodae</taxon>
        <taxon>Andropogoneae</taxon>
        <taxon>Sorghinae</taxon>
        <taxon>Sorghum</taxon>
    </lineage>
</organism>
<geneLocation type="chloroplast"/>
<name>RK16_SORBI</name>
<keyword id="KW-0150">Chloroplast</keyword>
<keyword id="KW-0934">Plastid</keyword>
<keyword id="KW-1185">Reference proteome</keyword>
<keyword id="KW-0687">Ribonucleoprotein</keyword>
<keyword id="KW-0689">Ribosomal protein</keyword>
<feature type="chain" id="PRO_0000276389" description="Large ribosomal subunit protein uL16c">
    <location>
        <begin position="1"/>
        <end position="136"/>
    </location>
</feature>
<gene>
    <name evidence="1" type="primary">rpl16</name>
</gene>
<sequence length="136" mass="15531">MLSPKRTRFRKQHRGRMKGKSCRGNHICFGRYALQVLEPAWITARQIEAGRRAMTRYARRGGKIWVRIFPDKPVTIRPTETRMGSGKGSPEYWVAVVKPGRILYEMSGVSETVARAAISIAASKMPIRSQFLRLEI</sequence>
<evidence type="ECO:0000255" key="1">
    <source>
        <dbReference type="HAMAP-Rule" id="MF_01342"/>
    </source>
</evidence>
<evidence type="ECO:0000305" key="2"/>
<reference key="1">
    <citation type="journal article" date="2007" name="Theor. Appl. Genet.">
        <title>Complete chloroplast genome sequences of Hordeum vulgare, Sorghum bicolor and Agrostis stolonifera, and comparative analyses with other grass genomes.</title>
        <authorList>
            <person name="Saski C."/>
            <person name="Lee S.-B."/>
            <person name="Fjellheim S."/>
            <person name="Guda C."/>
            <person name="Jansen R.K."/>
            <person name="Luo H."/>
            <person name="Tomkins J."/>
            <person name="Rognli O.A."/>
            <person name="Daniell H."/>
            <person name="Clarke J.L."/>
        </authorList>
    </citation>
    <scope>NUCLEOTIDE SEQUENCE [LARGE SCALE GENOMIC DNA]</scope>
    <source>
        <strain>cv. BTx623</strain>
    </source>
</reference>
<comment type="subunit">
    <text evidence="1">Part of the 50S ribosomal subunit.</text>
</comment>
<comment type="subcellular location">
    <subcellularLocation>
        <location>Plastid</location>
        <location>Chloroplast</location>
    </subcellularLocation>
</comment>
<comment type="similarity">
    <text evidence="1">Belongs to the universal ribosomal protein uL16 family.</text>
</comment>